<reference key="1">
    <citation type="submission" date="2009-03" db="EMBL/GenBank/DDBJ databases">
        <title>Complete genome sequence of Edwardsiella ictaluri 93-146.</title>
        <authorList>
            <person name="Williams M.L."/>
            <person name="Gillaspy A.F."/>
            <person name="Dyer D.W."/>
            <person name="Thune R.L."/>
            <person name="Waldbieser G.C."/>
            <person name="Schuster S.C."/>
            <person name="Gipson J."/>
            <person name="Zaitshik J."/>
            <person name="Landry C."/>
            <person name="Lawrence M.L."/>
        </authorList>
    </citation>
    <scope>NUCLEOTIDE SEQUENCE [LARGE SCALE GENOMIC DNA]</scope>
    <source>
        <strain>93-146</strain>
    </source>
</reference>
<organism>
    <name type="scientific">Edwardsiella ictaluri (strain 93-146)</name>
    <dbReference type="NCBI Taxonomy" id="634503"/>
    <lineage>
        <taxon>Bacteria</taxon>
        <taxon>Pseudomonadati</taxon>
        <taxon>Pseudomonadota</taxon>
        <taxon>Gammaproteobacteria</taxon>
        <taxon>Enterobacterales</taxon>
        <taxon>Hafniaceae</taxon>
        <taxon>Edwardsiella</taxon>
    </lineage>
</organism>
<protein>
    <recommendedName>
        <fullName evidence="1">Regulator of ribonuclease activity A</fullName>
    </recommendedName>
</protein>
<name>RRAA_EDWI9</name>
<feature type="chain" id="PRO_1000206350" description="Regulator of ribonuclease activity A">
    <location>
        <begin position="1"/>
        <end position="161"/>
    </location>
</feature>
<proteinExistence type="inferred from homology"/>
<gene>
    <name evidence="1" type="primary">rraA</name>
    <name type="ordered locus">NT01EI_3796</name>
</gene>
<sequence length="161" mass="17457">MKYDTSELCDIYHEEVNVVEPLFSNFGGRSSFGGQIITVKCFEDNGLLYDLLEENGRGRVLVIDGGGSVRRALVNAELGRLAVQNEWEGIVVYGAVRQVDDLEELDIGIQAMAAIPVGADSDGIGESDIRVNFGGVTFFSGDHLYADNTGIILAEEPLDIE</sequence>
<comment type="function">
    <text evidence="1">Globally modulates RNA abundance by binding to RNase E (Rne) and regulating its endonucleolytic activity. Can modulate Rne action in a substrate-dependent manner by altering the composition of the degradosome. Modulates RNA-binding and helicase activities of the degradosome.</text>
</comment>
<comment type="subunit">
    <text evidence="1">Homotrimer. Binds to both RNA-binding sites in the C-terminal region of Rne and to RhlB.</text>
</comment>
<comment type="subcellular location">
    <subcellularLocation>
        <location evidence="1">Cytoplasm</location>
    </subcellularLocation>
</comment>
<comment type="similarity">
    <text evidence="1">Belongs to the RraA family.</text>
</comment>
<evidence type="ECO:0000255" key="1">
    <source>
        <dbReference type="HAMAP-Rule" id="MF_00471"/>
    </source>
</evidence>
<accession>C5BB79</accession>
<dbReference type="EMBL" id="CP001600">
    <property type="protein sequence ID" value="ACR70921.1"/>
    <property type="molecule type" value="Genomic_DNA"/>
</dbReference>
<dbReference type="RefSeq" id="WP_015872955.1">
    <property type="nucleotide sequence ID" value="NZ_CP169062.1"/>
</dbReference>
<dbReference type="SMR" id="C5BB79"/>
<dbReference type="STRING" id="67780.B6E78_10555"/>
<dbReference type="GeneID" id="69540621"/>
<dbReference type="KEGG" id="eic:NT01EI_3796"/>
<dbReference type="PATRIC" id="fig|634503.3.peg.3390"/>
<dbReference type="HOGENOM" id="CLU_072626_4_0_6"/>
<dbReference type="OrthoDB" id="943692at2"/>
<dbReference type="Proteomes" id="UP000001485">
    <property type="component" value="Chromosome"/>
</dbReference>
<dbReference type="GO" id="GO:0005829">
    <property type="term" value="C:cytosol"/>
    <property type="evidence" value="ECO:0007669"/>
    <property type="project" value="TreeGrafter"/>
</dbReference>
<dbReference type="GO" id="GO:0060698">
    <property type="term" value="F:endoribonuclease inhibitor activity"/>
    <property type="evidence" value="ECO:0007669"/>
    <property type="project" value="UniProtKB-UniRule"/>
</dbReference>
<dbReference type="GO" id="GO:0019899">
    <property type="term" value="F:enzyme binding"/>
    <property type="evidence" value="ECO:0007669"/>
    <property type="project" value="UniProtKB-UniRule"/>
</dbReference>
<dbReference type="GO" id="GO:1902369">
    <property type="term" value="P:negative regulation of RNA catabolic process"/>
    <property type="evidence" value="ECO:0007669"/>
    <property type="project" value="TreeGrafter"/>
</dbReference>
<dbReference type="CDD" id="cd16841">
    <property type="entry name" value="RraA_family"/>
    <property type="match status" value="1"/>
</dbReference>
<dbReference type="FunFam" id="3.50.30.40:FF:000001">
    <property type="entry name" value="Regulator of ribonuclease activity A"/>
    <property type="match status" value="1"/>
</dbReference>
<dbReference type="Gene3D" id="3.50.30.40">
    <property type="entry name" value="Ribonuclease E inhibitor RraA/RraA-like"/>
    <property type="match status" value="1"/>
</dbReference>
<dbReference type="HAMAP" id="MF_00471">
    <property type="entry name" value="RraA"/>
    <property type="match status" value="1"/>
</dbReference>
<dbReference type="InterPro" id="IPR010203">
    <property type="entry name" value="RraA"/>
</dbReference>
<dbReference type="InterPro" id="IPR005493">
    <property type="entry name" value="RraA/RraA-like"/>
</dbReference>
<dbReference type="InterPro" id="IPR036704">
    <property type="entry name" value="RraA/RraA-like_sf"/>
</dbReference>
<dbReference type="InterPro" id="IPR014339">
    <property type="entry name" value="RraA_gpbac"/>
</dbReference>
<dbReference type="NCBIfam" id="TIGR01935">
    <property type="entry name" value="NOT-MenG"/>
    <property type="match status" value="1"/>
</dbReference>
<dbReference type="NCBIfam" id="NF006875">
    <property type="entry name" value="PRK09372.1"/>
    <property type="match status" value="1"/>
</dbReference>
<dbReference type="NCBIfam" id="TIGR02998">
    <property type="entry name" value="RraA_entero"/>
    <property type="match status" value="1"/>
</dbReference>
<dbReference type="PANTHER" id="PTHR33254">
    <property type="entry name" value="4-HYDROXY-4-METHYL-2-OXOGLUTARATE ALDOLASE 3-RELATED"/>
    <property type="match status" value="1"/>
</dbReference>
<dbReference type="PANTHER" id="PTHR33254:SF29">
    <property type="entry name" value="REGULATOR OF RIBONUCLEASE ACTIVITY A"/>
    <property type="match status" value="1"/>
</dbReference>
<dbReference type="Pfam" id="PF03737">
    <property type="entry name" value="RraA-like"/>
    <property type="match status" value="1"/>
</dbReference>
<dbReference type="SUPFAM" id="SSF89562">
    <property type="entry name" value="RraA-like"/>
    <property type="match status" value="1"/>
</dbReference>
<keyword id="KW-0963">Cytoplasm</keyword>